<organism evidence="9">
    <name type="scientific">Aedes albopictus</name>
    <name type="common">Asian tiger mosquito</name>
    <name type="synonym">Stegomyia albopicta</name>
    <dbReference type="NCBI Taxonomy" id="7160"/>
    <lineage>
        <taxon>Eukaryota</taxon>
        <taxon>Metazoa</taxon>
        <taxon>Ecdysozoa</taxon>
        <taxon>Arthropoda</taxon>
        <taxon>Hexapoda</taxon>
        <taxon>Insecta</taxon>
        <taxon>Pterygota</taxon>
        <taxon>Neoptera</taxon>
        <taxon>Endopterygota</taxon>
        <taxon>Diptera</taxon>
        <taxon>Nematocera</taxon>
        <taxon>Culicoidea</taxon>
        <taxon>Culicidae</taxon>
        <taxon>Culicinae</taxon>
        <taxon>Aedini</taxon>
        <taxon>Aedes</taxon>
        <taxon>Stegomyia</taxon>
    </lineage>
</organism>
<protein>
    <recommendedName>
        <fullName evidence="1">Venom allergen-1</fullName>
        <shortName evidence="5">AalbVA-1</shortName>
    </recommendedName>
    <alternativeName>
        <fullName evidence="7">Salivary antigen-5 related protein AG5-4</fullName>
    </alternativeName>
</protein>
<sequence>MAFNGIALLITATIFIGSCYANYCDSSLCRQGPHVACNAPQQFGPACGNNRKFVPMDSKLKTIILNTHNKLRAEIANGKHGFPQAARMPTLVWDDELAHIASFNARKCIFAHDKCRNTRQFKFSGQNLAITTFYGFNFQAGDRAENFTQEWFNEHKDCPKSYVDAYPSSHRGPQIGHFTQLVNDRTWKVGCSMMHYITNGKMINYYLVCNYTMTNMIGEPIYTKGRTGSKCETGQNPQFKGLCSPRERVKSESYNG</sequence>
<feature type="signal peptide" evidence="2">
    <location>
        <begin position="1"/>
        <end position="21"/>
    </location>
</feature>
<feature type="chain" id="PRO_5038293857" description="Venom allergen-1" evidence="2">
    <location>
        <begin position="22"/>
        <end position="256"/>
    </location>
</feature>
<feature type="domain" description="SCP" evidence="2">
    <location>
        <begin position="65"/>
        <end position="211"/>
    </location>
</feature>
<feature type="glycosylation site" description="N-linked (GlcNAc...) asparagine" evidence="3">
    <location>
        <position position="146"/>
    </location>
</feature>
<feature type="glycosylation site" description="N-linked (GlcNAc...) asparagine" evidence="3">
    <location>
        <position position="210"/>
    </location>
</feature>
<feature type="sequence conflict" description="In Ref. 2; AAV90699." evidence="6" ref="2">
    <original>K</original>
    <variation>M</variation>
    <location>
        <position position="79"/>
    </location>
</feature>
<feature type="sequence conflict" description="In Ref. 2; AAV90699." evidence="6" ref="2">
    <original>R</original>
    <variation>K</variation>
    <location>
        <position position="248"/>
    </location>
</feature>
<evidence type="ECO:0000250" key="1">
    <source>
        <dbReference type="UniProtKB" id="A0A1S4EWW7"/>
    </source>
</evidence>
<evidence type="ECO:0000255" key="2"/>
<evidence type="ECO:0000255" key="3">
    <source>
        <dbReference type="PROSITE-ProRule" id="PRU00498"/>
    </source>
</evidence>
<evidence type="ECO:0000269" key="4">
    <source>
    </source>
</evidence>
<evidence type="ECO:0000303" key="5">
    <source>
    </source>
</evidence>
<evidence type="ECO:0000305" key="6"/>
<evidence type="ECO:0000312" key="7">
    <source>
        <dbReference type="EMBL" id="AAV90699.1"/>
    </source>
</evidence>
<evidence type="ECO:0000312" key="8">
    <source>
        <dbReference type="EMBL" id="KXJ75435.1"/>
    </source>
</evidence>
<evidence type="ECO:0000312" key="9">
    <source>
        <dbReference type="Proteomes" id="UP000069940"/>
    </source>
</evidence>
<keyword id="KW-0325">Glycoprotein</keyword>
<keyword id="KW-0964">Secreted</keyword>
<keyword id="KW-0732">Signal</keyword>
<comment type="function">
    <text evidence="1">Activates autophagy in human monocytic cells, dendritic cells and macrophages.</text>
</comment>
<comment type="function">
    <text evidence="4">(Microbial infection) Promotes Zika virus replication in human dendritic cells and macrophages (PubMed:31937766). Facilitates Zika virus transmission from infected mosquitoes to the host in mouse model (PubMed:31937766).</text>
</comment>
<comment type="subcellular location">
    <subcellularLocation>
        <location evidence="1">Secreted</location>
    </subcellularLocation>
</comment>
<comment type="disruption phenotype">
    <text evidence="4">(Microbial infection) RNAi-mediated knockdown results in lower viremia and better survival in mice bitten by mosquitoes transmitting Zika virus (PubMed:31937766). No significant effects on Zika virus load in the mosquito salivary glands (PubMed:31937766).</text>
</comment>
<comment type="similarity">
    <text evidence="6">Belongs to the CRISP family.</text>
</comment>
<gene>
    <name evidence="8" type="ORF">RP20_CCG011740</name>
</gene>
<name>VA1_AEDAL</name>
<accession>A0A182GL09</accession>
<accession>Q5MIT3</accession>
<dbReference type="EMBL" id="JXUM01071010">
    <property type="status" value="NOT_ANNOTATED_CDS"/>
    <property type="molecule type" value="Genomic_DNA"/>
</dbReference>
<dbReference type="EMBL" id="KQ562639">
    <property type="protein sequence ID" value="KXJ75435.1"/>
    <property type="molecule type" value="Genomic_DNA"/>
</dbReference>
<dbReference type="EMBL" id="AY826127">
    <property type="protein sequence ID" value="AAV90699.1"/>
    <property type="molecule type" value="mRNA"/>
</dbReference>
<dbReference type="RefSeq" id="XP_019529736.1">
    <property type="nucleotide sequence ID" value="XM_019674191.1"/>
</dbReference>
<dbReference type="RefSeq" id="XP_019548573.1">
    <property type="nucleotide sequence ID" value="XM_019693028.1"/>
</dbReference>
<dbReference type="SMR" id="A0A182GL09"/>
<dbReference type="STRING" id="7160.A0A182GL09"/>
<dbReference type="EnsemblMetazoa" id="AALF011740-RA">
    <property type="protein sequence ID" value="AALF011740-PA"/>
    <property type="gene ID" value="AALF011740"/>
</dbReference>
<dbReference type="KEGG" id="aalb:109401619"/>
<dbReference type="KEGG" id="aalb:109418802"/>
<dbReference type="VEuPathDB" id="VectorBase:AALC636_032642"/>
<dbReference type="VEuPathDB" id="VectorBase:AALF011740"/>
<dbReference type="VEuPathDB" id="VectorBase:AALFPA_050456"/>
<dbReference type="OrthoDB" id="414826at2759"/>
<dbReference type="Proteomes" id="UP000069940">
    <property type="component" value="Unassembled WGS sequence"/>
</dbReference>
<dbReference type="GO" id="GO:0005576">
    <property type="term" value="C:extracellular region"/>
    <property type="evidence" value="ECO:0007669"/>
    <property type="project" value="UniProtKB-SubCell"/>
</dbReference>
<dbReference type="CDD" id="cd05380">
    <property type="entry name" value="CAP_euk"/>
    <property type="match status" value="1"/>
</dbReference>
<dbReference type="FunFam" id="3.40.33.10:FF:000007">
    <property type="entry name" value="Venom allergen"/>
    <property type="match status" value="1"/>
</dbReference>
<dbReference type="Gene3D" id="3.40.33.10">
    <property type="entry name" value="CAP"/>
    <property type="match status" value="1"/>
</dbReference>
<dbReference type="InterPro" id="IPR014044">
    <property type="entry name" value="CAP_dom"/>
</dbReference>
<dbReference type="InterPro" id="IPR035940">
    <property type="entry name" value="CAP_sf"/>
</dbReference>
<dbReference type="InterPro" id="IPR001283">
    <property type="entry name" value="CRISP-related"/>
</dbReference>
<dbReference type="InterPro" id="IPR034763">
    <property type="entry name" value="P14a_insect"/>
</dbReference>
<dbReference type="PANTHER" id="PTHR10334">
    <property type="entry name" value="CYSTEINE-RICH SECRETORY PROTEIN-RELATED"/>
    <property type="match status" value="1"/>
</dbReference>
<dbReference type="Pfam" id="PF00188">
    <property type="entry name" value="CAP"/>
    <property type="match status" value="1"/>
</dbReference>
<dbReference type="PIRSF" id="PIRSF038921">
    <property type="entry name" value="P14a"/>
    <property type="match status" value="1"/>
</dbReference>
<dbReference type="PRINTS" id="PR00837">
    <property type="entry name" value="V5TPXLIKE"/>
</dbReference>
<dbReference type="SMART" id="SM00198">
    <property type="entry name" value="SCP"/>
    <property type="match status" value="1"/>
</dbReference>
<dbReference type="SUPFAM" id="SSF55797">
    <property type="entry name" value="PR-1-like"/>
    <property type="match status" value="1"/>
</dbReference>
<reference evidence="8" key="1">
    <citation type="journal article" date="2015" name="Proc. Natl. Acad. Sci. U.S.A.">
        <title>Genome sequence of the Asian Tiger mosquito, Aedes albopictus, reveals insights into its biology, genetics, and evolution.</title>
        <authorList>
            <person name="Chen X.G."/>
            <person name="Jiang X."/>
            <person name="Gu J."/>
            <person name="Xu M."/>
            <person name="Wu Y."/>
            <person name="Deng Y."/>
            <person name="Zhang C."/>
            <person name="Bonizzoni M."/>
            <person name="Dermauw W."/>
            <person name="Vontas J."/>
            <person name="Armbruster P."/>
            <person name="Huang X."/>
            <person name="Yang Y."/>
            <person name="Zhang H."/>
            <person name="He W."/>
            <person name="Peng H."/>
            <person name="Liu Y."/>
            <person name="Wu K."/>
            <person name="Chen J."/>
            <person name="Lirakis M."/>
            <person name="Topalis P."/>
            <person name="Van Leeuwen T."/>
            <person name="Hall A.B."/>
            <person name="Jiang X."/>
            <person name="Thorpe C."/>
            <person name="Mueller R.L."/>
            <person name="Sun C."/>
            <person name="Waterhouse R.M."/>
            <person name="Yan G."/>
            <person name="Tu Z.J."/>
            <person name="Fang X."/>
            <person name="James A.A."/>
        </authorList>
    </citation>
    <scope>NUCLEOTIDE SEQUENCE [LARGE SCALE GENOMIC DNA]</scope>
    <source>
        <strain evidence="8">Foshan</strain>
    </source>
</reference>
<reference evidence="7" key="2">
    <citation type="journal article" date="2007" name="Insect Biochem. Mol. Biol.">
        <title>An insight into the sialome of the adult female mosquito Aedes albopictus.</title>
        <authorList>
            <person name="Arca B."/>
            <person name="Lombardo F."/>
            <person name="Francischetti I.M."/>
            <person name="Pham V.M."/>
            <person name="Mestres-Simon M."/>
            <person name="Andersen J.F."/>
            <person name="Ribeiro J.M."/>
        </authorList>
    </citation>
    <scope>NUCLEOTIDE SEQUENCE [LARGE SCALE MRNA]</scope>
    <source>
        <tissue evidence="7">Salivary gland</tissue>
    </source>
</reference>
<reference evidence="6" key="3">
    <citation type="journal article" date="2020" name="Nat. Commun.">
        <title>A mosquito salivary protein promotes flavivirus transmission by activation of autophagy.</title>
        <authorList>
            <person name="Sun P."/>
            <person name="Nie K."/>
            <person name="Zhu Y."/>
            <person name="Liu Y."/>
            <person name="Wu P."/>
            <person name="Liu Z."/>
            <person name="Du S."/>
            <person name="Fan H."/>
            <person name="Chen C.H."/>
            <person name="Zhang R."/>
            <person name="Wang P."/>
            <person name="Cheng G."/>
        </authorList>
    </citation>
    <scope>FUNCTION (MICROBIAL INFECTION)</scope>
    <scope>DISRUPTION PHENOTYPE (MICROBIAL INFECTION)</scope>
    <source>
        <strain evidence="5">Jiangsu</strain>
    </source>
</reference>
<proteinExistence type="evidence at transcript level"/>